<protein>
    <recommendedName>
        <fullName>Putative antiporter subunit mnhB2</fullName>
    </recommendedName>
    <alternativeName>
        <fullName>Mrp complex subunit B2</fullName>
    </alternativeName>
    <alternativeName>
        <fullName>Putative NADH-ubiquinone oxidoreductase subunit mnhB2</fullName>
    </alternativeName>
</protein>
<proteinExistence type="inferred from homology"/>
<gene>
    <name type="primary">mnhB2</name>
    <name type="synonym">mrpB2</name>
    <name type="ordered locus">MW0586</name>
</gene>
<feature type="chain" id="PRO_0000372275" description="Putative antiporter subunit mnhB2">
    <location>
        <begin position="1"/>
        <end position="141"/>
    </location>
</feature>
<feature type="transmembrane region" description="Helical" evidence="2">
    <location>
        <begin position="10"/>
        <end position="30"/>
    </location>
</feature>
<feature type="transmembrane region" description="Helical" evidence="2">
    <location>
        <begin position="35"/>
        <end position="55"/>
    </location>
</feature>
<feature type="transmembrane region" description="Helical" evidence="2">
    <location>
        <begin position="70"/>
        <end position="90"/>
    </location>
</feature>
<feature type="transmembrane region" description="Helical" evidence="2">
    <location>
        <begin position="114"/>
        <end position="134"/>
    </location>
</feature>
<evidence type="ECO:0000250" key="1"/>
<evidence type="ECO:0000255" key="2"/>
<evidence type="ECO:0000305" key="3"/>
<dbReference type="EMBL" id="BA000033">
    <property type="protein sequence ID" value="BAB94451.1"/>
    <property type="molecule type" value="Genomic_DNA"/>
</dbReference>
<dbReference type="RefSeq" id="WP_000661906.1">
    <property type="nucleotide sequence ID" value="NC_003923.1"/>
</dbReference>
<dbReference type="SMR" id="Q7A1N1"/>
<dbReference type="KEGG" id="sam:MW0586"/>
<dbReference type="HOGENOM" id="CLU_101659_1_1_9"/>
<dbReference type="GO" id="GO:0005886">
    <property type="term" value="C:plasma membrane"/>
    <property type="evidence" value="ECO:0007669"/>
    <property type="project" value="UniProtKB-SubCell"/>
</dbReference>
<dbReference type="GO" id="GO:0015297">
    <property type="term" value="F:antiporter activity"/>
    <property type="evidence" value="ECO:0007669"/>
    <property type="project" value="UniProtKB-KW"/>
</dbReference>
<dbReference type="GO" id="GO:0006811">
    <property type="term" value="P:monoatomic ion transport"/>
    <property type="evidence" value="ECO:0007669"/>
    <property type="project" value="UniProtKB-KW"/>
</dbReference>
<dbReference type="InterPro" id="IPR050622">
    <property type="entry name" value="CPA3_antiporter_subunitB"/>
</dbReference>
<dbReference type="InterPro" id="IPR007182">
    <property type="entry name" value="MnhB"/>
</dbReference>
<dbReference type="NCBIfam" id="NF009223">
    <property type="entry name" value="PRK12573.1"/>
    <property type="match status" value="1"/>
</dbReference>
<dbReference type="NCBIfam" id="NF009224">
    <property type="entry name" value="PRK12574.1"/>
    <property type="match status" value="1"/>
</dbReference>
<dbReference type="PANTHER" id="PTHR33932">
    <property type="entry name" value="NA(+)/H(+) ANTIPORTER SUBUNIT B"/>
    <property type="match status" value="1"/>
</dbReference>
<dbReference type="PANTHER" id="PTHR33932:SF4">
    <property type="entry name" value="NA(+)_H(+) ANTIPORTER SUBUNIT B"/>
    <property type="match status" value="1"/>
</dbReference>
<dbReference type="Pfam" id="PF04039">
    <property type="entry name" value="MnhB"/>
    <property type="match status" value="1"/>
</dbReference>
<organism>
    <name type="scientific">Staphylococcus aureus (strain MW2)</name>
    <dbReference type="NCBI Taxonomy" id="196620"/>
    <lineage>
        <taxon>Bacteria</taxon>
        <taxon>Bacillati</taxon>
        <taxon>Bacillota</taxon>
        <taxon>Bacilli</taxon>
        <taxon>Bacillales</taxon>
        <taxon>Staphylococcaceae</taxon>
        <taxon>Staphylococcus</taxon>
    </lineage>
</organism>
<comment type="subunit">
    <text evidence="1">May form a heterooligomeric complex that consists of seven subunits: mnhA2, mnhB2, mnhC2, mnhD2, mnhE2, mnhF2 and mnhG2.</text>
</comment>
<comment type="subcellular location">
    <subcellularLocation>
        <location evidence="3">Cell membrane</location>
        <topology evidence="3">Multi-pass membrane protein</topology>
    </subcellularLocation>
</comment>
<comment type="similarity">
    <text evidence="3">Belongs to the CPA3 antiporters (TC 2.A.63) subunit B family.</text>
</comment>
<name>MNHB2_STAAW</name>
<keyword id="KW-0050">Antiport</keyword>
<keyword id="KW-1003">Cell membrane</keyword>
<keyword id="KW-0406">Ion transport</keyword>
<keyword id="KW-0472">Membrane</keyword>
<keyword id="KW-0812">Transmembrane</keyword>
<keyword id="KW-1133">Transmembrane helix</keyword>
<keyword id="KW-0813">Transport</keyword>
<sequence>MKENDVVLRTVTKLVVFILLTFGFYVFFAGHNNPGGGFIGGLIFSSAFILMFLAFNVEEVLESLPIDFRILMIIGALVSSITAIIPMFFGKPFLSQYETTWILPILGQIHVSTITLFELGILFSVVGVIVTVMLSLSGGRS</sequence>
<accession>Q7A1N1</accession>
<reference key="1">
    <citation type="journal article" date="2002" name="Lancet">
        <title>Genome and virulence determinants of high virulence community-acquired MRSA.</title>
        <authorList>
            <person name="Baba T."/>
            <person name="Takeuchi F."/>
            <person name="Kuroda M."/>
            <person name="Yuzawa H."/>
            <person name="Aoki K."/>
            <person name="Oguchi A."/>
            <person name="Nagai Y."/>
            <person name="Iwama N."/>
            <person name="Asano K."/>
            <person name="Naimi T."/>
            <person name="Kuroda H."/>
            <person name="Cui L."/>
            <person name="Yamamoto K."/>
            <person name="Hiramatsu K."/>
        </authorList>
    </citation>
    <scope>NUCLEOTIDE SEQUENCE [LARGE SCALE GENOMIC DNA]</scope>
    <source>
        <strain>MW2</strain>
    </source>
</reference>